<organism>
    <name type="scientific">Klebsiella pneumoniae (strain 342)</name>
    <dbReference type="NCBI Taxonomy" id="507522"/>
    <lineage>
        <taxon>Bacteria</taxon>
        <taxon>Pseudomonadati</taxon>
        <taxon>Pseudomonadota</taxon>
        <taxon>Gammaproteobacteria</taxon>
        <taxon>Enterobacterales</taxon>
        <taxon>Enterobacteriaceae</taxon>
        <taxon>Klebsiella/Raoultella group</taxon>
        <taxon>Klebsiella</taxon>
        <taxon>Klebsiella pneumoniae complex</taxon>
    </lineage>
</organism>
<name>MTLD_KLEP3</name>
<comment type="catalytic activity">
    <reaction evidence="1">
        <text>D-mannitol 1-phosphate + NAD(+) = beta-D-fructose 6-phosphate + NADH + H(+)</text>
        <dbReference type="Rhea" id="RHEA:19661"/>
        <dbReference type="ChEBI" id="CHEBI:15378"/>
        <dbReference type="ChEBI" id="CHEBI:57540"/>
        <dbReference type="ChEBI" id="CHEBI:57634"/>
        <dbReference type="ChEBI" id="CHEBI:57945"/>
        <dbReference type="ChEBI" id="CHEBI:61381"/>
        <dbReference type="EC" id="1.1.1.17"/>
    </reaction>
</comment>
<comment type="similarity">
    <text evidence="1">Belongs to the mannitol dehydrogenase family.</text>
</comment>
<accession>B5XMV6</accession>
<protein>
    <recommendedName>
        <fullName evidence="1">Mannitol-1-phosphate 5-dehydrogenase</fullName>
        <ecNumber evidence="1">1.1.1.17</ecNumber>
    </recommendedName>
</protein>
<feature type="chain" id="PRO_1000099194" description="Mannitol-1-phosphate 5-dehydrogenase">
    <location>
        <begin position="1"/>
        <end position="382"/>
    </location>
</feature>
<feature type="binding site" evidence="1">
    <location>
        <begin position="3"/>
        <end position="14"/>
    </location>
    <ligand>
        <name>NAD(+)</name>
        <dbReference type="ChEBI" id="CHEBI:57540"/>
    </ligand>
</feature>
<reference key="1">
    <citation type="journal article" date="2008" name="PLoS Genet.">
        <title>Complete genome sequence of the N2-fixing broad host range endophyte Klebsiella pneumoniae 342 and virulence predictions verified in mice.</title>
        <authorList>
            <person name="Fouts D.E."/>
            <person name="Tyler H.L."/>
            <person name="DeBoy R.T."/>
            <person name="Daugherty S."/>
            <person name="Ren Q."/>
            <person name="Badger J.H."/>
            <person name="Durkin A.S."/>
            <person name="Huot H."/>
            <person name="Shrivastava S."/>
            <person name="Kothari S."/>
            <person name="Dodson R.J."/>
            <person name="Mohamoud Y."/>
            <person name="Khouri H."/>
            <person name="Roesch L.F.W."/>
            <person name="Krogfelt K.A."/>
            <person name="Struve C."/>
            <person name="Triplett E.W."/>
            <person name="Methe B.A."/>
        </authorList>
    </citation>
    <scope>NUCLEOTIDE SEQUENCE [LARGE SCALE GENOMIC DNA]</scope>
    <source>
        <strain>342</strain>
    </source>
</reference>
<sequence length="382" mass="41159">MKALHFGAGNIGRGFIGKLLADAGIELTFADVNQTVLDALNARHSYQVHVVGENEQVDTVSGVNAVSSIGDEVVDLIAEVDLVTTAVGPVVLERIAPAIAKGLAKRKAQGSERPLNIIACENMVRGTTQLKGHVFNALAEEDKAWVEAHIGFVDSAVDRIVPPSASATHDPLEVTVETFSEWIVDKTQFKGALPTIPGMELTDNLMAFVERKLFTLNTGHAITAYLGKLAGHQTIRDAILDEKIRAVVQGAMEESGAVLIKRYAFDPQKHAAYIQKILGRFENPYLKDDVERVGRQPLRKLSAGDRLIKPLLGTLEYGLPHRNLVKGIAAAMHFRSEDDPQAQELAALIADKGPQAALAQISGLDAASDVVAEAVNDYNAEK</sequence>
<evidence type="ECO:0000255" key="1">
    <source>
        <dbReference type="HAMAP-Rule" id="MF_00196"/>
    </source>
</evidence>
<dbReference type="EC" id="1.1.1.17" evidence="1"/>
<dbReference type="EMBL" id="CP000964">
    <property type="protein sequence ID" value="ACI07884.1"/>
    <property type="molecule type" value="Genomic_DNA"/>
</dbReference>
<dbReference type="SMR" id="B5XMV6"/>
<dbReference type="KEGG" id="kpe:KPK_0152"/>
<dbReference type="HOGENOM" id="CLU_036089_2_0_6"/>
<dbReference type="Proteomes" id="UP000001734">
    <property type="component" value="Chromosome"/>
</dbReference>
<dbReference type="GO" id="GO:0005829">
    <property type="term" value="C:cytosol"/>
    <property type="evidence" value="ECO:0007669"/>
    <property type="project" value="TreeGrafter"/>
</dbReference>
<dbReference type="GO" id="GO:0008926">
    <property type="term" value="F:mannitol-1-phosphate 5-dehydrogenase activity"/>
    <property type="evidence" value="ECO:0007669"/>
    <property type="project" value="UniProtKB-UniRule"/>
</dbReference>
<dbReference type="GO" id="GO:0019592">
    <property type="term" value="P:mannitol catabolic process"/>
    <property type="evidence" value="ECO:0007669"/>
    <property type="project" value="TreeGrafter"/>
</dbReference>
<dbReference type="FunFam" id="1.10.1040.10:FF:000009">
    <property type="entry name" value="Mannitol-1-phosphate 5-dehydrogenase"/>
    <property type="match status" value="1"/>
</dbReference>
<dbReference type="FunFam" id="3.40.50.720:FF:000075">
    <property type="entry name" value="Mannitol-1-phosphate 5-dehydrogenase"/>
    <property type="match status" value="1"/>
</dbReference>
<dbReference type="Gene3D" id="1.10.1040.10">
    <property type="entry name" value="N-(1-d-carboxylethyl)-l-norvaline Dehydrogenase, domain 2"/>
    <property type="match status" value="1"/>
</dbReference>
<dbReference type="Gene3D" id="3.40.50.720">
    <property type="entry name" value="NAD(P)-binding Rossmann-like Domain"/>
    <property type="match status" value="1"/>
</dbReference>
<dbReference type="HAMAP" id="MF_00196">
    <property type="entry name" value="Mannitol_dehydrog"/>
    <property type="match status" value="1"/>
</dbReference>
<dbReference type="InterPro" id="IPR008927">
    <property type="entry name" value="6-PGluconate_DH-like_C_sf"/>
</dbReference>
<dbReference type="InterPro" id="IPR013328">
    <property type="entry name" value="6PGD_dom2"/>
</dbReference>
<dbReference type="InterPro" id="IPR023028">
    <property type="entry name" value="Mannitol_1_phos_5_DH"/>
</dbReference>
<dbReference type="InterPro" id="IPR000669">
    <property type="entry name" value="Mannitol_DH"/>
</dbReference>
<dbReference type="InterPro" id="IPR013118">
    <property type="entry name" value="Mannitol_DH_C"/>
</dbReference>
<dbReference type="InterPro" id="IPR023027">
    <property type="entry name" value="Mannitol_DH_CS"/>
</dbReference>
<dbReference type="InterPro" id="IPR013131">
    <property type="entry name" value="Mannitol_DH_N"/>
</dbReference>
<dbReference type="InterPro" id="IPR036291">
    <property type="entry name" value="NAD(P)-bd_dom_sf"/>
</dbReference>
<dbReference type="NCBIfam" id="NF002646">
    <property type="entry name" value="PRK02318.1-2"/>
    <property type="match status" value="1"/>
</dbReference>
<dbReference type="NCBIfam" id="NF002647">
    <property type="entry name" value="PRK02318.1-3"/>
    <property type="match status" value="1"/>
</dbReference>
<dbReference type="NCBIfam" id="NF002648">
    <property type="entry name" value="PRK02318.1-4"/>
    <property type="match status" value="1"/>
</dbReference>
<dbReference type="NCBIfam" id="NF002650">
    <property type="entry name" value="PRK02318.2-2"/>
    <property type="match status" value="1"/>
</dbReference>
<dbReference type="NCBIfam" id="NF002652">
    <property type="entry name" value="PRK02318.2-5"/>
    <property type="match status" value="1"/>
</dbReference>
<dbReference type="PANTHER" id="PTHR30524:SF0">
    <property type="entry name" value="ALTRONATE OXIDOREDUCTASE-RELATED"/>
    <property type="match status" value="1"/>
</dbReference>
<dbReference type="PANTHER" id="PTHR30524">
    <property type="entry name" value="MANNITOL-1-PHOSPHATE 5-DEHYDROGENASE"/>
    <property type="match status" value="1"/>
</dbReference>
<dbReference type="Pfam" id="PF01232">
    <property type="entry name" value="Mannitol_dh"/>
    <property type="match status" value="1"/>
</dbReference>
<dbReference type="Pfam" id="PF08125">
    <property type="entry name" value="Mannitol_dh_C"/>
    <property type="match status" value="1"/>
</dbReference>
<dbReference type="PRINTS" id="PR00084">
    <property type="entry name" value="MTLDHDRGNASE"/>
</dbReference>
<dbReference type="SUPFAM" id="SSF48179">
    <property type="entry name" value="6-phosphogluconate dehydrogenase C-terminal domain-like"/>
    <property type="match status" value="1"/>
</dbReference>
<dbReference type="SUPFAM" id="SSF51735">
    <property type="entry name" value="NAD(P)-binding Rossmann-fold domains"/>
    <property type="match status" value="1"/>
</dbReference>
<dbReference type="PROSITE" id="PS00974">
    <property type="entry name" value="MANNITOL_DHGENASE"/>
    <property type="match status" value="1"/>
</dbReference>
<proteinExistence type="inferred from homology"/>
<keyword id="KW-0520">NAD</keyword>
<keyword id="KW-0560">Oxidoreductase</keyword>
<gene>
    <name evidence="1" type="primary">mtlD</name>
    <name type="ordered locus">KPK_0152</name>
</gene>